<dbReference type="EMBL" id="AF368294">
    <property type="protein sequence ID" value="AAM09571.1"/>
    <property type="molecule type" value="mRNA"/>
</dbReference>
<dbReference type="EMBL" id="DQ236342">
    <property type="protein sequence ID" value="ABB43161.1"/>
    <property type="molecule type" value="mRNA"/>
</dbReference>
<dbReference type="EMBL" id="AY280966">
    <property type="protein sequence ID" value="AAQ18784.1"/>
    <property type="molecule type" value="mRNA"/>
</dbReference>
<dbReference type="EMBL" id="AY280968">
    <property type="protein sequence ID" value="AAQ18786.1"/>
    <property type="molecule type" value="mRNA"/>
</dbReference>
<dbReference type="EMBL" id="AY280970">
    <property type="protein sequence ID" value="AAQ18788.1"/>
    <property type="molecule type" value="mRNA"/>
</dbReference>
<dbReference type="EMBL" id="AK026275">
    <property type="protein sequence ID" value="BAB15424.1"/>
    <property type="molecule type" value="mRNA"/>
</dbReference>
<dbReference type="EMBL" id="AK122583">
    <property type="protein sequence ID" value="BAC56924.1"/>
    <property type="molecule type" value="mRNA"/>
</dbReference>
<dbReference type="EMBL" id="AK291781">
    <property type="protein sequence ID" value="BAF84470.1"/>
    <property type="molecule type" value="mRNA"/>
</dbReference>
<dbReference type="EMBL" id="AC130304">
    <property type="status" value="NOT_ANNOTATED_CDS"/>
    <property type="molecule type" value="Genomic_DNA"/>
</dbReference>
<dbReference type="EMBL" id="BC077720">
    <property type="protein sequence ID" value="AAH77720.1"/>
    <property type="molecule type" value="mRNA"/>
</dbReference>
<dbReference type="CCDS" id="CCDS34881.1">
    <molecule id="Q6WKZ4-3"/>
</dbReference>
<dbReference type="CCDS" id="CCDS34882.1">
    <molecule id="Q6WKZ4-4"/>
</dbReference>
<dbReference type="RefSeq" id="NP_001002814.2">
    <molecule id="Q6WKZ4-4"/>
    <property type="nucleotide sequence ID" value="NM_001002814.3"/>
</dbReference>
<dbReference type="RefSeq" id="NP_079427.4">
    <molecule id="Q6WKZ4-3"/>
    <property type="nucleotide sequence ID" value="NM_025151.4"/>
</dbReference>
<dbReference type="PDB" id="4D0G">
    <property type="method" value="X-ray"/>
    <property type="resolution" value="2.50 A"/>
    <property type="chains" value="C=1216-1283"/>
</dbReference>
<dbReference type="PDBsum" id="4D0G"/>
<dbReference type="SMR" id="Q6WKZ4"/>
<dbReference type="BioGRID" id="123189">
    <property type="interactions" value="132"/>
</dbReference>
<dbReference type="CORUM" id="Q6WKZ4"/>
<dbReference type="FunCoup" id="Q6WKZ4">
    <property type="interactions" value="2216"/>
</dbReference>
<dbReference type="IntAct" id="Q6WKZ4">
    <property type="interactions" value="49"/>
</dbReference>
<dbReference type="MINT" id="Q6WKZ4"/>
<dbReference type="STRING" id="9606.ENSP00000331342"/>
<dbReference type="GlyGen" id="Q6WKZ4">
    <property type="glycosylation" value="2 sites, 1 O-linked glycan (1 site)"/>
</dbReference>
<dbReference type="iPTMnet" id="Q6WKZ4"/>
<dbReference type="MetOSite" id="Q6WKZ4"/>
<dbReference type="PhosphoSitePlus" id="Q6WKZ4"/>
<dbReference type="SwissPalm" id="Q6WKZ4"/>
<dbReference type="BioMuta" id="RAB11FIP1"/>
<dbReference type="DMDM" id="519668675"/>
<dbReference type="jPOST" id="Q6WKZ4"/>
<dbReference type="MassIVE" id="Q6WKZ4"/>
<dbReference type="PaxDb" id="9606-ENSP00000331342"/>
<dbReference type="PeptideAtlas" id="Q6WKZ4"/>
<dbReference type="ProteomicsDB" id="67762">
    <molecule id="Q6WKZ4-4"/>
</dbReference>
<dbReference type="ProteomicsDB" id="67763">
    <molecule id="Q6WKZ4-1"/>
</dbReference>
<dbReference type="ProteomicsDB" id="67764">
    <molecule id="Q6WKZ4-2"/>
</dbReference>
<dbReference type="ProteomicsDB" id="67765">
    <molecule id="Q6WKZ4-3"/>
</dbReference>
<dbReference type="ProteomicsDB" id="67766">
    <molecule id="Q6WKZ4-5"/>
</dbReference>
<dbReference type="Pumba" id="Q6WKZ4"/>
<dbReference type="Antibodypedia" id="4467">
    <property type="antibodies" value="214 antibodies from 35 providers"/>
</dbReference>
<dbReference type="DNASU" id="80223"/>
<dbReference type="Ensembl" id="ENST00000287263.8">
    <molecule id="Q6WKZ4-3"/>
    <property type="protein sequence ID" value="ENSP00000287263.4"/>
    <property type="gene ID" value="ENSG00000156675.16"/>
</dbReference>
<dbReference type="Ensembl" id="ENST00000330843.9">
    <molecule id="Q6WKZ4-4"/>
    <property type="protein sequence ID" value="ENSP00000331342.4"/>
    <property type="gene ID" value="ENSG00000156675.16"/>
</dbReference>
<dbReference type="Ensembl" id="ENST00000524118.1">
    <molecule id="Q6WKZ4-2"/>
    <property type="protein sequence ID" value="ENSP00000430680.1"/>
    <property type="gene ID" value="ENSG00000156675.16"/>
</dbReference>
<dbReference type="GeneID" id="80223"/>
<dbReference type="KEGG" id="hsa:80223"/>
<dbReference type="MANE-Select" id="ENST00000330843.9">
    <property type="protein sequence ID" value="ENSP00000331342.4"/>
    <property type="RefSeq nucleotide sequence ID" value="NM_001002814.3"/>
    <property type="RefSeq protein sequence ID" value="NP_001002814.2"/>
</dbReference>
<dbReference type="UCSC" id="uc003xkm.3">
    <molecule id="Q6WKZ4-4"/>
    <property type="organism name" value="human"/>
</dbReference>
<dbReference type="AGR" id="HGNC:30265"/>
<dbReference type="CTD" id="80223"/>
<dbReference type="DisGeNET" id="80223"/>
<dbReference type="GeneCards" id="RAB11FIP1"/>
<dbReference type="HGNC" id="HGNC:30265">
    <property type="gene designation" value="RAB11FIP1"/>
</dbReference>
<dbReference type="HPA" id="ENSG00000156675">
    <property type="expression patterns" value="Low tissue specificity"/>
</dbReference>
<dbReference type="MIM" id="608737">
    <property type="type" value="gene"/>
</dbReference>
<dbReference type="neXtProt" id="NX_Q6WKZ4"/>
<dbReference type="OpenTargets" id="ENSG00000156675"/>
<dbReference type="PharmGKB" id="PA134937501"/>
<dbReference type="VEuPathDB" id="HostDB:ENSG00000156675"/>
<dbReference type="eggNOG" id="ENOG502QVT0">
    <property type="taxonomic scope" value="Eukaryota"/>
</dbReference>
<dbReference type="GeneTree" id="ENSGT00940000159649"/>
<dbReference type="HOGENOM" id="CLU_015242_0_0_1"/>
<dbReference type="InParanoid" id="Q6WKZ4"/>
<dbReference type="OMA" id="NPFASEW"/>
<dbReference type="OrthoDB" id="8956628at2759"/>
<dbReference type="PAN-GO" id="Q6WKZ4">
    <property type="GO annotations" value="2 GO annotations based on evolutionary models"/>
</dbReference>
<dbReference type="PhylomeDB" id="Q6WKZ4"/>
<dbReference type="TreeFam" id="TF326172"/>
<dbReference type="PathwayCommons" id="Q6WKZ4"/>
<dbReference type="SignaLink" id="Q6WKZ4"/>
<dbReference type="SIGNOR" id="Q6WKZ4"/>
<dbReference type="BioGRID-ORCS" id="80223">
    <property type="hits" value="15 hits in 1153 CRISPR screens"/>
</dbReference>
<dbReference type="ChiTaRS" id="RAB11FIP1">
    <property type="organism name" value="human"/>
</dbReference>
<dbReference type="EvolutionaryTrace" id="Q6WKZ4"/>
<dbReference type="GeneWiki" id="RAB11FIP1"/>
<dbReference type="GenomeRNAi" id="80223"/>
<dbReference type="Pharos" id="Q6WKZ4">
    <property type="development level" value="Tbio"/>
</dbReference>
<dbReference type="PRO" id="PR:Q6WKZ4"/>
<dbReference type="Proteomes" id="UP000005640">
    <property type="component" value="Chromosome 8"/>
</dbReference>
<dbReference type="RNAct" id="Q6WKZ4">
    <property type="molecule type" value="protein"/>
</dbReference>
<dbReference type="Bgee" id="ENSG00000156675">
    <property type="expression patterns" value="Expressed in esophagus squamous epithelium and 199 other cell types or tissues"/>
</dbReference>
<dbReference type="ExpressionAtlas" id="Q6WKZ4">
    <property type="expression patterns" value="baseline and differential"/>
</dbReference>
<dbReference type="GO" id="GO:0005829">
    <property type="term" value="C:cytosol"/>
    <property type="evidence" value="ECO:0000314"/>
    <property type="project" value="HPA"/>
</dbReference>
<dbReference type="GO" id="GO:0043231">
    <property type="term" value="C:intracellular membrane-bounded organelle"/>
    <property type="evidence" value="ECO:0000314"/>
    <property type="project" value="HPA"/>
</dbReference>
<dbReference type="GO" id="GO:0030670">
    <property type="term" value="C:phagocytic vesicle membrane"/>
    <property type="evidence" value="ECO:0007669"/>
    <property type="project" value="UniProtKB-SubCell"/>
</dbReference>
<dbReference type="GO" id="GO:0055037">
    <property type="term" value="C:recycling endosome"/>
    <property type="evidence" value="ECO:0007669"/>
    <property type="project" value="UniProtKB-SubCell"/>
</dbReference>
<dbReference type="GO" id="GO:0031267">
    <property type="term" value="F:small GTPase binding"/>
    <property type="evidence" value="ECO:0007669"/>
    <property type="project" value="InterPro"/>
</dbReference>
<dbReference type="GO" id="GO:0070164">
    <property type="term" value="P:negative regulation of adiponectin secretion"/>
    <property type="evidence" value="ECO:0000314"/>
    <property type="project" value="CACAO"/>
</dbReference>
<dbReference type="GO" id="GO:0015031">
    <property type="term" value="P:protein transport"/>
    <property type="evidence" value="ECO:0007669"/>
    <property type="project" value="UniProtKB-KW"/>
</dbReference>
<dbReference type="GO" id="GO:0045055">
    <property type="term" value="P:regulated exocytosis"/>
    <property type="evidence" value="ECO:0000318"/>
    <property type="project" value="GO_Central"/>
</dbReference>
<dbReference type="CDD" id="cd08682">
    <property type="entry name" value="C2_Rab11-FIP_classI"/>
    <property type="match status" value="1"/>
</dbReference>
<dbReference type="FunFam" id="2.60.40.150:FF:000077">
    <property type="entry name" value="rab11 family-interacting protein 1 isoform X1"/>
    <property type="match status" value="1"/>
</dbReference>
<dbReference type="FunFam" id="1.20.5.2440:FF:000002">
    <property type="entry name" value="rab11 family-interacting protein 2 isoform X1"/>
    <property type="match status" value="1"/>
</dbReference>
<dbReference type="Gene3D" id="1.20.5.2440">
    <property type="match status" value="1"/>
</dbReference>
<dbReference type="Gene3D" id="2.60.40.150">
    <property type="entry name" value="C2 domain"/>
    <property type="match status" value="1"/>
</dbReference>
<dbReference type="InterPro" id="IPR000008">
    <property type="entry name" value="C2_dom"/>
</dbReference>
<dbReference type="InterPro" id="IPR035892">
    <property type="entry name" value="C2_domain_sf"/>
</dbReference>
<dbReference type="InterPro" id="IPR037245">
    <property type="entry name" value="FIP-RBD_C_sf"/>
</dbReference>
<dbReference type="InterPro" id="IPR037789">
    <property type="entry name" value="FIP_classI"/>
</dbReference>
<dbReference type="InterPro" id="IPR019018">
    <property type="entry name" value="Rab-bd_FIP-RBD"/>
</dbReference>
<dbReference type="PANTHER" id="PTHR15746:SF22">
    <property type="entry name" value="RAB11 FAMILY-INTERACTING PROTEIN 1"/>
    <property type="match status" value="1"/>
</dbReference>
<dbReference type="PANTHER" id="PTHR15746">
    <property type="entry name" value="RAB11-RELATED"/>
    <property type="match status" value="1"/>
</dbReference>
<dbReference type="Pfam" id="PF00168">
    <property type="entry name" value="C2"/>
    <property type="match status" value="1"/>
</dbReference>
<dbReference type="Pfam" id="PF09457">
    <property type="entry name" value="RBD-FIP"/>
    <property type="match status" value="1"/>
</dbReference>
<dbReference type="SMART" id="SM00239">
    <property type="entry name" value="C2"/>
    <property type="match status" value="1"/>
</dbReference>
<dbReference type="SUPFAM" id="SSF49562">
    <property type="entry name" value="C2 domain (Calcium/lipid-binding domain, CaLB)"/>
    <property type="match status" value="1"/>
</dbReference>
<dbReference type="SUPFAM" id="SSF144270">
    <property type="entry name" value="Eferin C-derminal domain-like"/>
    <property type="match status" value="1"/>
</dbReference>
<dbReference type="PROSITE" id="PS50004">
    <property type="entry name" value="C2"/>
    <property type="match status" value="1"/>
</dbReference>
<dbReference type="PROSITE" id="PS51511">
    <property type="entry name" value="FIP_RBD"/>
    <property type="match status" value="1"/>
</dbReference>
<reference key="1">
    <citation type="journal article" date="2002" name="J. Biol. Chem.">
        <title>Rab coupling protein (RCP), a novel Rab4 and Rab11 effector protein.</title>
        <authorList>
            <person name="Lindsay A.J."/>
            <person name="Hendrick A.G."/>
            <person name="Cantalupo G."/>
            <person name="Senic-Matuglia F."/>
            <person name="Goud B."/>
            <person name="Bucci C."/>
            <person name="McCaffrey M.W."/>
        </authorList>
    </citation>
    <scope>NUCLEOTIDE SEQUENCE [MRNA] (ISOFORM 2)</scope>
    <scope>FUNCTION IN ENDOSOMAL RECYCLING PROCESS</scope>
    <scope>VARIANT THR-1185</scope>
    <scope>INTERACTION WITH RAB4A AND RAB11A</scope>
    <scope>SUBCELLULAR LOCATION</scope>
    <scope>TISSUE SPECIFICITY</scope>
    <source>
        <tissue>Cervix carcinoma</tissue>
    </source>
</reference>
<reference key="2">
    <citation type="journal article" date="2006" name="Biochim. Biophys. Acta">
        <title>The Rab11-FIP1/RCP gene codes for multiple protein transcripts related to the plasma membrane recycling system.</title>
        <authorList>
            <person name="Jin M."/>
            <person name="Goldenring J.R."/>
        </authorList>
    </citation>
    <scope>NUCLEOTIDE SEQUENCE [MRNA] (ISOFORMS 1; 3 AND 4)</scope>
    <scope>FUNCTION</scope>
    <scope>SUBCELLULAR LOCATION</scope>
    <scope>ALTERNATIVE SPLICING</scope>
    <scope>VARIANTS LYS-622; VAL-651 AND THR-1185</scope>
    <source>
        <tissue>Gastric antrum</tissue>
    </source>
</reference>
<reference key="3">
    <citation type="journal article" date="2004" name="Nat. Genet.">
        <title>Complete sequencing and characterization of 21,243 full-length human cDNAs.</title>
        <authorList>
            <person name="Ota T."/>
            <person name="Suzuki Y."/>
            <person name="Nishikawa T."/>
            <person name="Otsuki T."/>
            <person name="Sugiyama T."/>
            <person name="Irie R."/>
            <person name="Wakamatsu A."/>
            <person name="Hayashi K."/>
            <person name="Sato H."/>
            <person name="Nagai K."/>
            <person name="Kimura K."/>
            <person name="Makita H."/>
            <person name="Sekine M."/>
            <person name="Obayashi M."/>
            <person name="Nishi T."/>
            <person name="Shibahara T."/>
            <person name="Tanaka T."/>
            <person name="Ishii S."/>
            <person name="Yamamoto J."/>
            <person name="Saito K."/>
            <person name="Kawai Y."/>
            <person name="Isono Y."/>
            <person name="Nakamura Y."/>
            <person name="Nagahari K."/>
            <person name="Murakami K."/>
            <person name="Yasuda T."/>
            <person name="Iwayanagi T."/>
            <person name="Wagatsuma M."/>
            <person name="Shiratori A."/>
            <person name="Sudo H."/>
            <person name="Hosoiri T."/>
            <person name="Kaku Y."/>
            <person name="Kodaira H."/>
            <person name="Kondo H."/>
            <person name="Sugawara M."/>
            <person name="Takahashi M."/>
            <person name="Kanda K."/>
            <person name="Yokoi T."/>
            <person name="Furuya T."/>
            <person name="Kikkawa E."/>
            <person name="Omura Y."/>
            <person name="Abe K."/>
            <person name="Kamihara K."/>
            <person name="Katsuta N."/>
            <person name="Sato K."/>
            <person name="Tanikawa M."/>
            <person name="Yamazaki M."/>
            <person name="Ninomiya K."/>
            <person name="Ishibashi T."/>
            <person name="Yamashita H."/>
            <person name="Murakawa K."/>
            <person name="Fujimori K."/>
            <person name="Tanai H."/>
            <person name="Kimata M."/>
            <person name="Watanabe M."/>
            <person name="Hiraoka S."/>
            <person name="Chiba Y."/>
            <person name="Ishida S."/>
            <person name="Ono Y."/>
            <person name="Takiguchi S."/>
            <person name="Watanabe S."/>
            <person name="Yosida M."/>
            <person name="Hotuta T."/>
            <person name="Kusano J."/>
            <person name="Kanehori K."/>
            <person name="Takahashi-Fujii A."/>
            <person name="Hara H."/>
            <person name="Tanase T.-O."/>
            <person name="Nomura Y."/>
            <person name="Togiya S."/>
            <person name="Komai F."/>
            <person name="Hara R."/>
            <person name="Takeuchi K."/>
            <person name="Arita M."/>
            <person name="Imose N."/>
            <person name="Musashino K."/>
            <person name="Yuuki H."/>
            <person name="Oshima A."/>
            <person name="Sasaki N."/>
            <person name="Aotsuka S."/>
            <person name="Yoshikawa Y."/>
            <person name="Matsunawa H."/>
            <person name="Ichihara T."/>
            <person name="Shiohata N."/>
            <person name="Sano S."/>
            <person name="Moriya S."/>
            <person name="Momiyama H."/>
            <person name="Satoh N."/>
            <person name="Takami S."/>
            <person name="Terashima Y."/>
            <person name="Suzuki O."/>
            <person name="Nakagawa S."/>
            <person name="Senoh A."/>
            <person name="Mizoguchi H."/>
            <person name="Goto Y."/>
            <person name="Shimizu F."/>
            <person name="Wakebe H."/>
            <person name="Hishigaki H."/>
            <person name="Watanabe T."/>
            <person name="Sugiyama A."/>
            <person name="Takemoto M."/>
            <person name="Kawakami B."/>
            <person name="Yamazaki M."/>
            <person name="Watanabe K."/>
            <person name="Kumagai A."/>
            <person name="Itakura S."/>
            <person name="Fukuzumi Y."/>
            <person name="Fujimori Y."/>
            <person name="Komiyama M."/>
            <person name="Tashiro H."/>
            <person name="Tanigami A."/>
            <person name="Fujiwara T."/>
            <person name="Ono T."/>
            <person name="Yamada K."/>
            <person name="Fujii Y."/>
            <person name="Ozaki K."/>
            <person name="Hirao M."/>
            <person name="Ohmori Y."/>
            <person name="Kawabata A."/>
            <person name="Hikiji T."/>
            <person name="Kobatake N."/>
            <person name="Inagaki H."/>
            <person name="Ikema Y."/>
            <person name="Okamoto S."/>
            <person name="Okitani R."/>
            <person name="Kawakami T."/>
            <person name="Noguchi S."/>
            <person name="Itoh T."/>
            <person name="Shigeta K."/>
            <person name="Senba T."/>
            <person name="Matsumura K."/>
            <person name="Nakajima Y."/>
            <person name="Mizuno T."/>
            <person name="Morinaga M."/>
            <person name="Sasaki M."/>
            <person name="Togashi T."/>
            <person name="Oyama M."/>
            <person name="Hata H."/>
            <person name="Watanabe M."/>
            <person name="Komatsu T."/>
            <person name="Mizushima-Sugano J."/>
            <person name="Satoh T."/>
            <person name="Shirai Y."/>
            <person name="Takahashi Y."/>
            <person name="Nakagawa K."/>
            <person name="Okumura K."/>
            <person name="Nagase T."/>
            <person name="Nomura N."/>
            <person name="Kikuchi H."/>
            <person name="Masuho Y."/>
            <person name="Yamashita R."/>
            <person name="Nakai K."/>
            <person name="Yada T."/>
            <person name="Nakamura Y."/>
            <person name="Ohara O."/>
            <person name="Isogai T."/>
            <person name="Sugano S."/>
        </authorList>
    </citation>
    <scope>NUCLEOTIDE SEQUENCE [LARGE SCALE MRNA] (ISOFORMS 3 AND 5)</scope>
    <scope>NUCLEOTIDE SEQUENCE [LARGE SCALE MRNA] OF 603-1283</scope>
    <scope>VARIANTS LYS-622 AND THR-1185</scope>
    <source>
        <tissue>Placenta</tissue>
        <tissue>Small intestine</tissue>
    </source>
</reference>
<reference key="4">
    <citation type="journal article" date="2006" name="Nature">
        <title>DNA sequence and analysis of human chromosome 8.</title>
        <authorList>
            <person name="Nusbaum C."/>
            <person name="Mikkelsen T.S."/>
            <person name="Zody M.C."/>
            <person name="Asakawa S."/>
            <person name="Taudien S."/>
            <person name="Garber M."/>
            <person name="Kodira C.D."/>
            <person name="Schueler M.G."/>
            <person name="Shimizu A."/>
            <person name="Whittaker C.A."/>
            <person name="Chang J.L."/>
            <person name="Cuomo C.A."/>
            <person name="Dewar K."/>
            <person name="FitzGerald M.G."/>
            <person name="Yang X."/>
            <person name="Allen N.R."/>
            <person name="Anderson S."/>
            <person name="Asakawa T."/>
            <person name="Blechschmidt K."/>
            <person name="Bloom T."/>
            <person name="Borowsky M.L."/>
            <person name="Butler J."/>
            <person name="Cook A."/>
            <person name="Corum B."/>
            <person name="DeArellano K."/>
            <person name="DeCaprio D."/>
            <person name="Dooley K.T."/>
            <person name="Dorris L. III"/>
            <person name="Engels R."/>
            <person name="Gloeckner G."/>
            <person name="Hafez N."/>
            <person name="Hagopian D.S."/>
            <person name="Hall J.L."/>
            <person name="Ishikawa S.K."/>
            <person name="Jaffe D.B."/>
            <person name="Kamat A."/>
            <person name="Kudoh J."/>
            <person name="Lehmann R."/>
            <person name="Lokitsang T."/>
            <person name="Macdonald P."/>
            <person name="Major J.E."/>
            <person name="Matthews C.D."/>
            <person name="Mauceli E."/>
            <person name="Menzel U."/>
            <person name="Mihalev A.H."/>
            <person name="Minoshima S."/>
            <person name="Murayama Y."/>
            <person name="Naylor J.W."/>
            <person name="Nicol R."/>
            <person name="Nguyen C."/>
            <person name="O'Leary S.B."/>
            <person name="O'Neill K."/>
            <person name="Parker S.C.J."/>
            <person name="Polley A."/>
            <person name="Raymond C.K."/>
            <person name="Reichwald K."/>
            <person name="Rodriguez J."/>
            <person name="Sasaki T."/>
            <person name="Schilhabel M."/>
            <person name="Siddiqui R."/>
            <person name="Smith C.L."/>
            <person name="Sneddon T.P."/>
            <person name="Talamas J.A."/>
            <person name="Tenzin P."/>
            <person name="Topham K."/>
            <person name="Venkataraman V."/>
            <person name="Wen G."/>
            <person name="Yamazaki S."/>
            <person name="Young S.K."/>
            <person name="Zeng Q."/>
            <person name="Zimmer A.R."/>
            <person name="Rosenthal A."/>
            <person name="Birren B.W."/>
            <person name="Platzer M."/>
            <person name="Shimizu N."/>
            <person name="Lander E.S."/>
        </authorList>
    </citation>
    <scope>NUCLEOTIDE SEQUENCE [LARGE SCALE GENOMIC DNA]</scope>
</reference>
<reference key="5">
    <citation type="journal article" date="2004" name="Genome Res.">
        <title>The status, quality, and expansion of the NIH full-length cDNA project: the Mammalian Gene Collection (MGC).</title>
        <authorList>
            <consortium name="The MGC Project Team"/>
        </authorList>
    </citation>
    <scope>NUCLEOTIDE SEQUENCE [LARGE SCALE MRNA] (ISOFORM 2)</scope>
    <source>
        <tissue>Lung</tissue>
        <tissue>Spleen</tissue>
    </source>
</reference>
<reference key="6">
    <citation type="journal article" date="2001" name="J. Biol. Chem.">
        <title>Identification and characterization of a family of Rab11-interacting proteins.</title>
        <authorList>
            <person name="Hales C.M."/>
            <person name="Griner R."/>
            <person name="Hobdy-Henderson K.C."/>
            <person name="Dorn M.C."/>
            <person name="Hardy D."/>
            <person name="Kumar R."/>
            <person name="Navarre J."/>
            <person name="Chan E.K.L."/>
            <person name="Lapierre L.A."/>
            <person name="Goldenring J.R."/>
        </authorList>
    </citation>
    <scope>INTERACTION WITH RAB11A; RAB11B AND RAB25</scope>
</reference>
<reference key="7">
    <citation type="journal article" date="2002" name="Biochem. Biophys. Res. Commun.">
        <title>The novel Rab11-FIP/Rip/RCP family of proteins displays extensive homo- and hetero-interacting abilities.</title>
        <authorList>
            <person name="Wallace D.M."/>
            <person name="Lindsay A.J."/>
            <person name="Hendrick A.G."/>
            <person name="McCaffrey M.W."/>
        </authorList>
    </citation>
    <scope>SUBUNIT</scope>
</reference>
<reference key="8">
    <citation type="journal article" date="2004" name="FEBS Lett.">
        <title>Characterisation of the Rab binding properties of Rab coupling protein (RCP) by site-directed mutagenesis.</title>
        <authorList>
            <person name="Lindsay A.J."/>
            <person name="McCaffrey M.W."/>
        </authorList>
    </citation>
    <scope>INTERACTION WITH RAB4A AND RAB11A</scope>
    <scope>MUTAGENESIS OF TYR-1254; ILE-1255 AND ASP-1256</scope>
    <scope>SUBCELLULAR LOCATION</scope>
    <scope>DOMAIN</scope>
</reference>
<reference key="9">
    <citation type="journal article" date="2004" name="Mol. Biol. Cell">
        <title>The RCP-Rab11 complex regulates endocytic protein sorting.</title>
        <authorList>
            <person name="Peden A.A."/>
            <person name="Schonteich E."/>
            <person name="Chun J."/>
            <person name="Junutula J.R."/>
            <person name="Scheller R.H."/>
            <person name="Prekeris R."/>
        </authorList>
    </citation>
    <scope>FUNCTION IN ENDOSOMAL RECYCLING PROCESS</scope>
    <scope>INTERACTION WITH RAB11A</scope>
    <scope>SUBCELLULAR LOCATION</scope>
</reference>
<reference key="10">
    <citation type="journal article" date="2004" name="Traffic">
        <title>Rab coupling protein associates with phagosomes and regulates recycling from the phagosomal compartment.</title>
        <authorList>
            <person name="Damiani M.T."/>
            <person name="Pavarotti M."/>
            <person name="Leiva N."/>
            <person name="Lindsay A.J."/>
            <person name="McCaffrey M.W."/>
            <person name="Colombo M.I."/>
        </authorList>
    </citation>
    <scope>FUNCTION IN PHAGOSOME TRAFFICKING AND PHAGOCYTOSIS</scope>
    <scope>SUBCELLULAR LOCATION</scope>
</reference>
<reference key="11">
    <citation type="journal article" date="2008" name="Mol. Cell">
        <title>Kinase-selective enrichment enables quantitative phosphoproteomics of the kinome across the cell cycle.</title>
        <authorList>
            <person name="Daub H."/>
            <person name="Olsen J.V."/>
            <person name="Bairlein M."/>
            <person name="Gnad F."/>
            <person name="Oppermann F.S."/>
            <person name="Korner R."/>
            <person name="Greff Z."/>
            <person name="Keri G."/>
            <person name="Stemmann O."/>
            <person name="Mann M."/>
        </authorList>
    </citation>
    <scope>PHOSPHORYLATION [LARGE SCALE ANALYSIS] AT SER-300; SER-477; SER-545; SER-758 AND SER-1135</scope>
    <scope>IDENTIFICATION BY MASS SPECTROMETRY [LARGE SCALE ANALYSIS]</scope>
    <source>
        <tissue>Cervix carcinoma</tissue>
    </source>
</reference>
<reference key="12">
    <citation type="journal article" date="2008" name="Proc. Natl. Acad. Sci. U.S.A.">
        <title>A quantitative atlas of mitotic phosphorylation.</title>
        <authorList>
            <person name="Dephoure N."/>
            <person name="Zhou C."/>
            <person name="Villen J."/>
            <person name="Beausoleil S.A."/>
            <person name="Bakalarski C.E."/>
            <person name="Elledge S.J."/>
            <person name="Gygi S.P."/>
        </authorList>
    </citation>
    <scope>PHOSPHORYLATION [LARGE SCALE ANALYSIS] AT SER-202; SER-339; SER-343; SER-345; SER-435 AND SER-545</scope>
    <scope>IDENTIFICATION BY MASS SPECTROMETRY [LARGE SCALE ANALYSIS]</scope>
    <source>
        <tissue>Cervix carcinoma</tissue>
    </source>
</reference>
<reference key="13">
    <citation type="journal article" date="2009" name="Anal. Chem.">
        <title>Lys-N and trypsin cover complementary parts of the phosphoproteome in a refined SCX-based approach.</title>
        <authorList>
            <person name="Gauci S."/>
            <person name="Helbig A.O."/>
            <person name="Slijper M."/>
            <person name="Krijgsveld J."/>
            <person name="Heck A.J."/>
            <person name="Mohammed S."/>
        </authorList>
    </citation>
    <scope>IDENTIFICATION BY MASS SPECTROMETRY [LARGE SCALE ANALYSIS]</scope>
</reference>
<reference key="14">
    <citation type="journal article" date="2009" name="Sci. Signal.">
        <title>Quantitative phosphoproteomic analysis of T cell receptor signaling reveals system-wide modulation of protein-protein interactions.</title>
        <authorList>
            <person name="Mayya V."/>
            <person name="Lundgren D.H."/>
            <person name="Hwang S.-I."/>
            <person name="Rezaul K."/>
            <person name="Wu L."/>
            <person name="Eng J.K."/>
            <person name="Rodionov V."/>
            <person name="Han D.K."/>
        </authorList>
    </citation>
    <scope>PHOSPHORYLATION [LARGE SCALE ANALYSIS] AT SER-357</scope>
    <scope>IDENTIFICATION BY MASS SPECTROMETRY [LARGE SCALE ANALYSIS]</scope>
    <source>
        <tissue>Leukemic T-cell</tissue>
    </source>
</reference>
<reference key="15">
    <citation type="journal article" date="2010" name="Sci. Signal.">
        <title>Quantitative phosphoproteomics reveals widespread full phosphorylation site occupancy during mitosis.</title>
        <authorList>
            <person name="Olsen J.V."/>
            <person name="Vermeulen M."/>
            <person name="Santamaria A."/>
            <person name="Kumar C."/>
            <person name="Miller M.L."/>
            <person name="Jensen L.J."/>
            <person name="Gnad F."/>
            <person name="Cox J."/>
            <person name="Jensen T.S."/>
            <person name="Nigg E.A."/>
            <person name="Brunak S."/>
            <person name="Mann M."/>
        </authorList>
    </citation>
    <scope>PHOSPHORYLATION [LARGE SCALE ANALYSIS] AT SER-300</scope>
    <scope>IDENTIFICATION BY MASS SPECTROMETRY [LARGE SCALE ANALYSIS]</scope>
    <source>
        <tissue>Cervix carcinoma</tissue>
    </source>
</reference>
<reference key="16">
    <citation type="journal article" date="2011" name="BMC Syst. Biol.">
        <title>Initial characterization of the human central proteome.</title>
        <authorList>
            <person name="Burkard T.R."/>
            <person name="Planyavsky M."/>
            <person name="Kaupe I."/>
            <person name="Breitwieser F.P."/>
            <person name="Buerckstuemmer T."/>
            <person name="Bennett K.L."/>
            <person name="Superti-Furga G."/>
            <person name="Colinge J."/>
        </authorList>
    </citation>
    <scope>IDENTIFICATION BY MASS SPECTROMETRY [LARGE SCALE ANALYSIS]</scope>
</reference>
<reference key="17">
    <citation type="journal article" date="2011" name="Sci. Signal.">
        <title>System-wide temporal characterization of the proteome and phosphoproteome of human embryonic stem cell differentiation.</title>
        <authorList>
            <person name="Rigbolt K.T."/>
            <person name="Prokhorova T.A."/>
            <person name="Akimov V."/>
            <person name="Henningsen J."/>
            <person name="Johansen P.T."/>
            <person name="Kratchmarova I."/>
            <person name="Kassem M."/>
            <person name="Mann M."/>
            <person name="Olsen J.V."/>
            <person name="Blagoev B."/>
        </authorList>
    </citation>
    <scope>IDENTIFICATION BY MASS SPECTROMETRY [LARGE SCALE ANALYSIS]</scope>
</reference>
<reference key="18">
    <citation type="journal article" date="2013" name="J. Proteome Res.">
        <title>Toward a comprehensive characterization of a human cancer cell phosphoproteome.</title>
        <authorList>
            <person name="Zhou H."/>
            <person name="Di Palma S."/>
            <person name="Preisinger C."/>
            <person name="Peng M."/>
            <person name="Polat A.N."/>
            <person name="Heck A.J."/>
            <person name="Mohammed S."/>
        </authorList>
    </citation>
    <scope>PHOSPHORYLATION [LARGE SCALE ANALYSIS] AT SER-202; SER-206; SER-234; SER-300; SER-315; SER-339; SER-345; SER-356; SER-357; SER-435; SER-529 AND SER-545</scope>
    <scope>IDENTIFICATION BY MASS SPECTROMETRY [LARGE SCALE ANALYSIS]</scope>
    <source>
        <tissue>Cervix carcinoma</tissue>
        <tissue>Erythroleukemia</tissue>
    </source>
</reference>
<reference key="19">
    <citation type="journal article" date="2014" name="J. Proteomics">
        <title>An enzyme assisted RP-RPLC approach for in-depth analysis of human liver phosphoproteome.</title>
        <authorList>
            <person name="Bian Y."/>
            <person name="Song C."/>
            <person name="Cheng K."/>
            <person name="Dong M."/>
            <person name="Wang F."/>
            <person name="Huang J."/>
            <person name="Sun D."/>
            <person name="Wang L."/>
            <person name="Ye M."/>
            <person name="Zou H."/>
        </authorList>
    </citation>
    <scope>IDENTIFICATION BY MASS SPECTROMETRY [LARGE SCALE ANALYSIS]</scope>
    <source>
        <tissue>Liver</tissue>
    </source>
</reference>
<reference key="20">
    <citation type="journal article" date="2015" name="J. Biol. Chem.">
        <title>Structure-Function Analyses of the Interactions between Rab11 and Rab14 Small GTPases with Their Shared Effector Rab Coupling Protein (RCP).</title>
        <authorList>
            <person name="Lall P."/>
            <person name="Lindsay A.J."/>
            <person name="Hanscom S."/>
            <person name="Kecman T."/>
            <person name="Taglauer E.S."/>
            <person name="McVeigh U.M."/>
            <person name="Franklin E."/>
            <person name="McCaffrey M.W."/>
            <person name="Khan A.R."/>
        </authorList>
    </citation>
    <scope>FUNCTION</scope>
    <scope>INTERACTION WITH RAB11A AND RAB14</scope>
    <scope>DOMAIN</scope>
    <scope>SUBCELLULAR LOCATION</scope>
</reference>
<accession>Q6WKZ4</accession>
<accession>J3KNP0</accession>
<accession>Q307T1</accession>
<accession>Q6AZK4</accession>
<accession>Q6WKZ2</accession>
<accession>Q6WKZ6</accession>
<accession>Q86YV4</accession>
<accession>Q8TDL1</accession>
<accession>Q9H642</accession>
<keyword id="KW-0002">3D-structure</keyword>
<keyword id="KW-0025">Alternative splicing</keyword>
<keyword id="KW-0968">Cytoplasmic vesicle</keyword>
<keyword id="KW-0967">Endosome</keyword>
<keyword id="KW-0472">Membrane</keyword>
<keyword id="KW-0597">Phosphoprotein</keyword>
<keyword id="KW-0653">Protein transport</keyword>
<keyword id="KW-1267">Proteomics identification</keyword>
<keyword id="KW-1185">Reference proteome</keyword>
<keyword id="KW-0813">Transport</keyword>
<gene>
    <name evidence="20" type="primary">RAB11FIP1</name>
    <name type="synonym">RCP</name>
</gene>
<feature type="chain" id="PRO_0000097304" description="Rab11 family-interacting protein 1">
    <location>
        <begin position="1"/>
        <end position="1283"/>
    </location>
</feature>
<feature type="domain" description="C2" evidence="2">
    <location>
        <begin position="1"/>
        <end position="126"/>
    </location>
</feature>
<feature type="domain" description="FIP-RBD" evidence="3">
    <location>
        <begin position="1211"/>
        <end position="1273"/>
    </location>
</feature>
<feature type="region of interest" description="Disordered" evidence="4">
    <location>
        <begin position="161"/>
        <end position="281"/>
    </location>
</feature>
<feature type="region of interest" description="Disordered" evidence="4">
    <location>
        <begin position="330"/>
        <end position="727"/>
    </location>
</feature>
<feature type="region of interest" description="Disordered" evidence="4">
    <location>
        <begin position="741"/>
        <end position="782"/>
    </location>
</feature>
<feature type="region of interest" description="Disordered" evidence="4">
    <location>
        <begin position="835"/>
        <end position="913"/>
    </location>
</feature>
<feature type="region of interest" description="Disordered" evidence="4">
    <location>
        <begin position="969"/>
        <end position="993"/>
    </location>
</feature>
<feature type="region of interest" description="Disordered" evidence="4">
    <location>
        <begin position="1037"/>
        <end position="1141"/>
    </location>
</feature>
<feature type="region of interest" description="Necessary for interaction with RAB4A and RAB11A, subcellular location and endosomal recycling" evidence="10">
    <location>
        <begin position="1219"/>
        <end position="1283"/>
    </location>
</feature>
<feature type="compositionally biased region" description="Basic and acidic residues" evidence="4">
    <location>
        <begin position="161"/>
        <end position="185"/>
    </location>
</feature>
<feature type="compositionally biased region" description="Polar residues" evidence="4">
    <location>
        <begin position="225"/>
        <end position="239"/>
    </location>
</feature>
<feature type="compositionally biased region" description="Acidic residues" evidence="4">
    <location>
        <begin position="257"/>
        <end position="266"/>
    </location>
</feature>
<feature type="compositionally biased region" description="Basic and acidic residues" evidence="4">
    <location>
        <begin position="419"/>
        <end position="433"/>
    </location>
</feature>
<feature type="compositionally biased region" description="Basic and acidic residues" evidence="4">
    <location>
        <begin position="442"/>
        <end position="451"/>
    </location>
</feature>
<feature type="compositionally biased region" description="Basic and acidic residues" evidence="4">
    <location>
        <begin position="482"/>
        <end position="491"/>
    </location>
</feature>
<feature type="compositionally biased region" description="Low complexity" evidence="4">
    <location>
        <begin position="588"/>
        <end position="612"/>
    </location>
</feature>
<feature type="compositionally biased region" description="Polar residues" evidence="4">
    <location>
        <begin position="637"/>
        <end position="652"/>
    </location>
</feature>
<feature type="compositionally biased region" description="Basic and acidic residues" evidence="4">
    <location>
        <begin position="698"/>
        <end position="715"/>
    </location>
</feature>
<feature type="compositionally biased region" description="Basic and acidic residues" evidence="4">
    <location>
        <begin position="855"/>
        <end position="866"/>
    </location>
</feature>
<feature type="compositionally biased region" description="Acidic residues" evidence="4">
    <location>
        <begin position="975"/>
        <end position="986"/>
    </location>
</feature>
<feature type="compositionally biased region" description="Polar residues" evidence="4">
    <location>
        <begin position="1037"/>
        <end position="1048"/>
    </location>
</feature>
<feature type="compositionally biased region" description="Basic and acidic residues" evidence="4">
    <location>
        <begin position="1116"/>
        <end position="1131"/>
    </location>
</feature>
<feature type="modified residue" description="Phosphoserine" evidence="1">
    <location>
        <position position="184"/>
    </location>
</feature>
<feature type="modified residue" description="Phosphoserine" evidence="21 25">
    <location>
        <position position="202"/>
    </location>
</feature>
<feature type="modified residue" description="Phosphoserine" evidence="25">
    <location>
        <position position="206"/>
    </location>
</feature>
<feature type="modified residue" description="Phosphoserine" evidence="25">
    <location>
        <position position="234"/>
    </location>
</feature>
<feature type="modified residue" description="Phosphoserine" evidence="22 24 25">
    <location>
        <position position="300"/>
    </location>
</feature>
<feature type="modified residue" description="Phosphoserine" evidence="25">
    <location>
        <position position="315"/>
    </location>
</feature>
<feature type="modified residue" description="Phosphoserine" evidence="21 25">
    <location>
        <position position="339"/>
    </location>
</feature>
<feature type="modified residue" description="Phosphoserine" evidence="1">
    <location>
        <position position="341"/>
    </location>
</feature>
<feature type="modified residue" description="Phosphoserine" evidence="21">
    <location>
        <position position="343"/>
    </location>
</feature>
<feature type="modified residue" description="Phosphoserine" evidence="21 25">
    <location>
        <position position="345"/>
    </location>
</feature>
<feature type="modified residue" description="Phosphoserine" evidence="25">
    <location>
        <position position="356"/>
    </location>
</feature>
<feature type="modified residue" description="Phosphoserine" evidence="23 25">
    <location>
        <position position="357"/>
    </location>
</feature>
<feature type="modified residue" description="Phosphoserine" evidence="1">
    <location>
        <position position="382"/>
    </location>
</feature>
<feature type="modified residue" description="Phosphoserine" evidence="21 25">
    <location>
        <position position="435"/>
    </location>
</feature>
<feature type="modified residue" description="Phosphoserine" evidence="22">
    <location>
        <position position="477"/>
    </location>
</feature>
<feature type="modified residue" description="Phosphoserine" evidence="25">
    <location>
        <position position="529"/>
    </location>
</feature>
<feature type="modified residue" description="Phosphoserine" evidence="21 22 25">
    <location>
        <position position="545"/>
    </location>
</feature>
<feature type="modified residue" description="Phosphoserine" evidence="22">
    <location>
        <position position="758"/>
    </location>
</feature>
<feature type="modified residue" description="Phosphoserine" evidence="22">
    <location>
        <position position="1135"/>
    </location>
</feature>
<feature type="splice variant" id="VSP_013726" description="In isoform 3." evidence="15 17">
    <location>
        <begin position="1"/>
        <end position="671"/>
    </location>
</feature>
<feature type="splice variant" id="VSP_013727" description="In isoform 4." evidence="17">
    <location>
        <begin position="1"/>
        <end position="148"/>
    </location>
</feature>
<feature type="splice variant" id="VSP_013728" description="In isoform 5." evidence="15">
    <original>RDQGRRKTQWYKLKSKPGKKDKERGEI</original>
    <variation>SSLGKSFFKTLKKRAWAIFLRLCLKKN</variation>
    <location>
        <begin position="116"/>
        <end position="142"/>
    </location>
</feature>
<feature type="splice variant" id="VSP_013729" description="In isoform 5." evidence="15">
    <location>
        <begin position="143"/>
        <end position="1283"/>
    </location>
</feature>
<feature type="splice variant" id="VSP_013730" description="In isoform 2 and isoform 4." evidence="14 16 17">
    <location>
        <begin position="541"/>
        <end position="1174"/>
    </location>
</feature>
<feature type="splice variant" id="VSP_013731" description="In isoform 4." evidence="17">
    <original>KYSPSDPAFA</original>
    <variation>VCPLRSWCVR</variation>
    <location>
        <begin position="1212"/>
        <end position="1221"/>
    </location>
</feature>
<feature type="splice variant" id="VSP_013732" description="In isoform 4." evidence="17">
    <location>
        <begin position="1222"/>
        <end position="1283"/>
    </location>
</feature>
<feature type="sequence variant" id="VAR_069365" description="In dbSNP:rs7341564." evidence="8 12">
    <original>Q</original>
    <variation>K</variation>
    <location>
        <position position="622"/>
    </location>
</feature>
<feature type="sequence variant" id="VAR_059714" description="In dbSNP:rs12541651." evidence="12">
    <original>A</original>
    <variation>V</variation>
    <location>
        <position position="651"/>
    </location>
</feature>
<feature type="sequence variant" id="VAR_056977" description="In dbSNP:rs16887092.">
    <original>A</original>
    <variation>V</variation>
    <location>
        <position position="768"/>
    </location>
</feature>
<feature type="sequence variant" id="VAR_022447" description="In dbSNP:rs7817179." evidence="6 8 12">
    <original>M</original>
    <variation>T</variation>
    <location>
        <position position="1185"/>
    </location>
</feature>
<feature type="mutagenesis site" description="Does not abolish the interaction with RAB11A, homooligomerization and subcellular location. Reduces the interaction with RAB4A." evidence="10">
    <original>Y</original>
    <variation>F</variation>
    <location>
        <position position="1254"/>
    </location>
</feature>
<feature type="mutagenesis site" description="Abolishes the interaction with RAB11A, RAB4A and RAB14, homooligomerization and subcellular location." evidence="10 13">
    <original>I</original>
    <variation>E</variation>
    <location>
        <position position="1255"/>
    </location>
</feature>
<feature type="mutagenesis site" description="Does not abolish the interaction with RAB11A, homooligomerization and subcellular location. Reduces the interaction with RAB4A." evidence="10">
    <original>D</original>
    <variation>N</variation>
    <location>
        <position position="1256"/>
    </location>
</feature>
<feature type="sequence conflict" description="In Ref. 1; AAM09571." evidence="19" ref="1">
    <original>EAK</original>
    <variation>QPT</variation>
    <location>
        <begin position="330"/>
        <end position="332"/>
    </location>
</feature>
<feature type="sequence conflict" description="In Ref. 1; AAM09571." evidence="19" ref="1">
    <original>H</original>
    <variation>T</variation>
    <location>
        <position position="353"/>
    </location>
</feature>
<feature type="sequence conflict" description="In Ref. 1; AAM09571." evidence="19" ref="1">
    <original>S</original>
    <variation>T</variation>
    <location>
        <position position="377"/>
    </location>
</feature>
<feature type="sequence conflict" description="In Ref. 1; AAM09571." evidence="19" ref="1">
    <original>QL</original>
    <variation>DV</variation>
    <location>
        <begin position="380"/>
        <end position="381"/>
    </location>
</feature>
<feature type="sequence conflict" description="In Ref. 1; AAM09571." evidence="19" ref="1">
    <original>S</original>
    <variation>T</variation>
    <location>
        <position position="397"/>
    </location>
</feature>
<feature type="sequence conflict" description="In Ref. 1; AAM09571." evidence="19" ref="1">
    <original>V</original>
    <variation>I</variation>
    <location>
        <position position="404"/>
    </location>
</feature>
<feature type="sequence conflict" description="In Ref. 1; AAM09571." evidence="19" ref="1">
    <original>N</original>
    <variation>K</variation>
    <location>
        <position position="411"/>
    </location>
</feature>
<feature type="sequence conflict" description="In Ref. 1; AAM09571." evidence="19" ref="1">
    <original>P</original>
    <variation>L</variation>
    <location>
        <position position="455"/>
    </location>
</feature>
<feature type="sequence conflict" description="In Ref. 2; AAQ18788." evidence="19" ref="2">
    <original>D</original>
    <variation>G</variation>
    <location>
        <position position="482"/>
    </location>
</feature>
<feature type="helix" evidence="26">
    <location>
        <begin position="1233"/>
        <end position="1265"/>
    </location>
</feature>
<feature type="helix" evidence="26">
    <location>
        <begin position="1267"/>
        <end position="1270"/>
    </location>
</feature>
<evidence type="ECO:0000250" key="1">
    <source>
        <dbReference type="UniProtKB" id="Q9D620"/>
    </source>
</evidence>
<evidence type="ECO:0000255" key="2">
    <source>
        <dbReference type="PROSITE-ProRule" id="PRU00041"/>
    </source>
</evidence>
<evidence type="ECO:0000255" key="3">
    <source>
        <dbReference type="PROSITE-ProRule" id="PRU00844"/>
    </source>
</evidence>
<evidence type="ECO:0000256" key="4">
    <source>
        <dbReference type="SAM" id="MobiDB-lite"/>
    </source>
</evidence>
<evidence type="ECO:0000269" key="5">
    <source>
    </source>
</evidence>
<evidence type="ECO:0000269" key="6">
    <source>
    </source>
</evidence>
<evidence type="ECO:0000269" key="7">
    <source>
    </source>
</evidence>
<evidence type="ECO:0000269" key="8">
    <source>
    </source>
</evidence>
<evidence type="ECO:0000269" key="9">
    <source>
    </source>
</evidence>
<evidence type="ECO:0000269" key="10">
    <source>
    </source>
</evidence>
<evidence type="ECO:0000269" key="11">
    <source>
    </source>
</evidence>
<evidence type="ECO:0000269" key="12">
    <source>
    </source>
</evidence>
<evidence type="ECO:0000269" key="13">
    <source>
    </source>
</evidence>
<evidence type="ECO:0000303" key="14">
    <source>
    </source>
</evidence>
<evidence type="ECO:0000303" key="15">
    <source>
    </source>
</evidence>
<evidence type="ECO:0000303" key="16">
    <source>
    </source>
</evidence>
<evidence type="ECO:0000303" key="17">
    <source>
    </source>
</evidence>
<evidence type="ECO:0000303" key="18">
    <source>
    </source>
</evidence>
<evidence type="ECO:0000305" key="19"/>
<evidence type="ECO:0000312" key="20">
    <source>
        <dbReference type="HGNC" id="HGNC:30265"/>
    </source>
</evidence>
<evidence type="ECO:0007744" key="21">
    <source>
    </source>
</evidence>
<evidence type="ECO:0007744" key="22">
    <source>
    </source>
</evidence>
<evidence type="ECO:0007744" key="23">
    <source>
    </source>
</evidence>
<evidence type="ECO:0007744" key="24">
    <source>
    </source>
</evidence>
<evidence type="ECO:0007744" key="25">
    <source>
    </source>
</evidence>
<evidence type="ECO:0007829" key="26">
    <source>
        <dbReference type="PDB" id="4D0G"/>
    </source>
</evidence>
<comment type="function">
    <text evidence="6 9 11 12 13">A Rab11 effector protein involved in the endosomal recycling process. Also involved in controlling membrane trafficking along the phagocytic pathway and in phagocytosis. Interaction with RAB14 may function in the process of neurite formation (PubMed:26032412).</text>
</comment>
<comment type="subunit">
    <text evidence="13">Interacts with RAB11A (GTP-bound form); the interaction induces RAB11FIP1 recruitment to membranes (PubMed:26032412). Interacts with RAB14 (GTP-bound form) (PubMed:26032412).</text>
</comment>
<comment type="subunit">
    <molecule>Isoform 2</molecule>
    <text evidence="5 6 7 9 10">Homooligomer. Isoform 2 interacts with RAB4A, RAB11A, RAB11B and RAB25. According to PubMed:15280022, RAB4A binding to RAB11FIP1 is of very low affinity in vitro and in vivo.</text>
</comment>
<comment type="subcellular location">
    <subcellularLocation>
        <location evidence="6 9 10 11 12">Recycling endosome</location>
    </subcellularLocation>
    <subcellularLocation>
        <location evidence="13">Cytoplasmic vesicle</location>
    </subcellularLocation>
    <text evidence="13">RAB11A rather than RAB4A mediates localization in the endocytic recycling compartment (ERC). Colocalizes with Rab11 and RAB14 on punctate vesicles (PubMed:26032412).</text>
</comment>
<comment type="subcellular location">
    <molecule>Isoform 2</molecule>
    <subcellularLocation>
        <location>Cytoplasmic vesicle</location>
        <location>Phagosome membrane</location>
    </subcellularLocation>
    <text>Membrane-bound (isoform 2). Colocalizes with RAB11A at phagosomes (isoform 2).</text>
</comment>
<comment type="alternative products">
    <event type="alternative splicing"/>
    <isoform>
        <id>Q6WKZ4-4</id>
        <name>1</name>
        <name>Rab11-FIP 1B</name>
        <sequence type="displayed"/>
    </isoform>
    <isoform>
        <id>Q6WKZ4-3</id>
        <name>2</name>
        <name>Rab11-FIP 1C</name>
        <sequence type="described" ref="VSP_013730"/>
    </isoform>
    <isoform>
        <id>Q6WKZ4-1</id>
        <name>3</name>
        <name>Rab11-FIP 1A</name>
        <sequence type="described" ref="VSP_013726"/>
    </isoform>
    <isoform>
        <id>Q6WKZ4-2</id>
        <name>4</name>
        <name>Rab11-FIP 1H</name>
        <name>No Rab11-binding protein 2</name>
        <sequence type="described" ref="VSP_013727 VSP_013730 VSP_013731 VSP_013732"/>
    </isoform>
    <isoform>
        <id>Q6WKZ4-5</id>
        <name>5</name>
        <sequence type="described" ref="VSP_013728 VSP_013729"/>
    </isoform>
</comment>
<comment type="tissue specificity">
    <text evidence="6">Isoform 2 is expressed in brain, heart, testis, lung, spleen, ovary and small intestine.</text>
</comment>
<comment type="domain">
    <text evidence="10 13">The FIP-RBD is involved in the interaction with Rab proteins.</text>
</comment>
<sequence>MSLMVSAGRGLGAVWSPTHVQVTVLQARGLRAKGPGGTSDAYAVIQVGKEKYATSVSERSLGAPVWREEATFELPSLLSSGPAAAATLQLTVLHRALLGLDKFLGRAEVDLRDLHRDQGRRKTQWYKLKSKPGKKDKERGEIEVDIQFMRNNMTASMFDLSMKDKSRNPFGKLKDKIKGKNKDSGSDTASAIIPSTTPSVDSDDESVVKDKKKKSKIKTLLSKSNLQKTPLSQSMSVLPTSKPEKVLLRPGDFQSQWDEDDNEDESSSASDVMSHKRTASTDLKQLNQVNFTLPKKEGLSFLGGLRSKNDVLSRSNVCINGNHVYLEQPEAKGEIKDSSPSSSPSPKGFRKKHLFSSTENLAAGSWKEPAEGGGLSSDRQLSESSTKDSLKSMTLPSYRPAPLVSGDLRENMAPANSEATKEAKESKKPESRRSSLLSLMTGKKDVAKGSEGENPLTVPGREKEGMLMGVKPGEDASGPAEDLVRRSEKDTAAVVSRQGSSLNLFEDVQITEPEAEPESKSEPRPPISSPRAPQTRAVKPRLEVSPEAQPTARLPSPTDSPSSLPPLPSSSGQASVPSELGHGADTQSSESPSVFSSLSSPIAAPISTSTPIESWPLVDRGQAKSEGPPLLPKAELQTESLTPVPNSGSSALGSLFKQPSFPANKGTEDSLMGRTRETGTEKNTSSLELEESLPEQPETGRQEEELPRFPCKKQDYSPSSGEAQEVPFALSLSSDGAVSPVGELAAGGDRDLESQAGSLVESKARDAAEEVAPPLPMGASVPSIDSMMRKLEEMGLNLRKDQKKTKKRVSFSEQLFTEEAVAGAALLVEGHSSCPQELNPAWSVAGNASDGEPPESPHAEDSERESVTTPGPATCGAPASPADHLLLPSQEESFSEVPMSEASSAKDTPLFRMEGEDALVTQYQSKASDHEGLLSDPLSDLQLVSDFKSPIMADLNLSLPSIPEVASDDERIDQVEDDGDQVEDDGETAKSSTLDIGALSLGLVVPCPERGKGPSGEADRLVLGEGLCDFRLQAPQASVTAPSEQTTEFGIHKPHLGKSSSLDKQLPGPSGGEEEKPMGNGSPSPPPGTSLDNPVPSPSPSEIFPVTHSFPSSAHSDTHHTSTAESQKKATAEGSAGRVENFGKRKPLLQAWVSPSETHPVSAQPGAGTGSAKHRLHPVKPMNAMATKVANCSLGTATIISENLNNEVMMKKYSPSDPAFAYAQLTHDELIQLVLKQKETISKKEFQVRELEDYIDNLLVRVMEETPNILRIPTQVGKKAGKM</sequence>
<proteinExistence type="evidence at protein level"/>
<name>RFIP1_HUMAN</name>
<organism>
    <name type="scientific">Homo sapiens</name>
    <name type="common">Human</name>
    <dbReference type="NCBI Taxonomy" id="9606"/>
    <lineage>
        <taxon>Eukaryota</taxon>
        <taxon>Metazoa</taxon>
        <taxon>Chordata</taxon>
        <taxon>Craniata</taxon>
        <taxon>Vertebrata</taxon>
        <taxon>Euteleostomi</taxon>
        <taxon>Mammalia</taxon>
        <taxon>Eutheria</taxon>
        <taxon>Euarchontoglires</taxon>
        <taxon>Primates</taxon>
        <taxon>Haplorrhini</taxon>
        <taxon>Catarrhini</taxon>
        <taxon>Hominidae</taxon>
        <taxon>Homo</taxon>
    </lineage>
</organism>
<protein>
    <recommendedName>
        <fullName>Rab11 family-interacting protein 1</fullName>
        <shortName>Rab11-FIP1</shortName>
    </recommendedName>
    <alternativeName>
        <fullName evidence="18">Rab-coupling protein</fullName>
    </alternativeName>
</protein>